<reference key="1">
    <citation type="journal article" date="1998" name="J. Bacteriol.">
        <title>The ATP synthase atpHAGDC (F1) operon from Rhodobacter capsulatus.</title>
        <authorList>
            <person name="Borghese R."/>
            <person name="Crimi M."/>
            <person name="Fava L."/>
            <person name="Melandri B.A."/>
        </authorList>
    </citation>
    <scope>NUCLEOTIDE SEQUENCE [GENOMIC DNA]</scope>
    <source>
        <strain>ATCC 33303 / B10</strain>
    </source>
</reference>
<reference key="2">
    <citation type="journal article" date="1988" name="Biochim. Biophys. Acta">
        <title>Purification of the H+-ATPase from Rhodobacter capsulatus, identification of the F1F0 components and reconstitution of the active enzyme.</title>
        <authorList>
            <person name="Gabellini N."/>
            <person name="Gao Z."/>
            <person name="Eckerskorn C."/>
            <person name="Lottspeich F."/>
            <person name="Oesterhelt D."/>
        </authorList>
    </citation>
    <scope>PROTEIN SEQUENCE OF 2-9</scope>
    <scope>SUBUNIT</scope>
    <scope>SUBCELLULAR LOCATION</scope>
    <source>
        <strain>GA</strain>
    </source>
</reference>
<protein>
    <recommendedName>
        <fullName evidence="1">ATP synthase gamma chain</fullName>
    </recommendedName>
    <alternativeName>
        <fullName evidence="1">ATP synthase F1 sector gamma subunit</fullName>
    </alternativeName>
    <alternativeName>
        <fullName evidence="1">F-ATPase gamma subunit</fullName>
    </alternativeName>
</protein>
<feature type="initiator methionine" description="Removed" evidence="2">
    <location>
        <position position="1"/>
    </location>
</feature>
<feature type="chain" id="PRO_0000073356" description="ATP synthase gamma chain">
    <location>
        <begin position="2"/>
        <end position="290"/>
    </location>
</feature>
<sequence length="290" mass="31243">MPSLKDLKNRIVSVKNTRKITKAMQMVAAANIRRAQESAEAARPYAERMNAVMSSLAGAVGSTDGAPRLLAGTGSDKVHLLVIMTGERGLCGGFNANIAKLAKAKAMELLAQGKTVKILTVGKKGRDALRRDLGQYYIDHIDLSDVKKLSYPVAQKISQNIIDRFEAGEYDVATIFFSVFQSVISQVPTAKQVIPAQFETDAASASAVYDYEPGDQEILTALLPRAVATAIFAALLENNASFNGAQMSAMDNATRNAGDMIDRLTIEYNRSRQAAITKELIEIISGAEAL</sequence>
<proteinExistence type="evidence at protein level"/>
<keyword id="KW-0066">ATP synthesis</keyword>
<keyword id="KW-0139">CF(1)</keyword>
<keyword id="KW-0903">Direct protein sequencing</keyword>
<keyword id="KW-0375">Hydrogen ion transport</keyword>
<keyword id="KW-0406">Ion transport</keyword>
<keyword id="KW-0472">Membrane</keyword>
<keyword id="KW-0813">Transport</keyword>
<organism>
    <name type="scientific">Rhodobacter capsulatus</name>
    <name type="common">Rhodopseudomonas capsulata</name>
    <dbReference type="NCBI Taxonomy" id="1061"/>
    <lineage>
        <taxon>Bacteria</taxon>
        <taxon>Pseudomonadati</taxon>
        <taxon>Pseudomonadota</taxon>
        <taxon>Alphaproteobacteria</taxon>
        <taxon>Rhodobacterales</taxon>
        <taxon>Rhodobacter group</taxon>
        <taxon>Rhodobacter</taxon>
    </lineage>
</organism>
<dbReference type="EMBL" id="X99599">
    <property type="protein sequence ID" value="CAA67909.1"/>
    <property type="molecule type" value="Genomic_DNA"/>
</dbReference>
<dbReference type="SMR" id="P72246"/>
<dbReference type="GO" id="GO:0005886">
    <property type="term" value="C:plasma membrane"/>
    <property type="evidence" value="ECO:0007669"/>
    <property type="project" value="UniProtKB-UniRule"/>
</dbReference>
<dbReference type="GO" id="GO:0042717">
    <property type="term" value="C:plasma membrane-derived chromatophore membrane"/>
    <property type="evidence" value="ECO:0007669"/>
    <property type="project" value="UniProtKB-SubCell"/>
</dbReference>
<dbReference type="GO" id="GO:0045259">
    <property type="term" value="C:proton-transporting ATP synthase complex"/>
    <property type="evidence" value="ECO:0007669"/>
    <property type="project" value="UniProtKB-KW"/>
</dbReference>
<dbReference type="GO" id="GO:0005524">
    <property type="term" value="F:ATP binding"/>
    <property type="evidence" value="ECO:0007669"/>
    <property type="project" value="UniProtKB-UniRule"/>
</dbReference>
<dbReference type="GO" id="GO:0046933">
    <property type="term" value="F:proton-transporting ATP synthase activity, rotational mechanism"/>
    <property type="evidence" value="ECO:0007669"/>
    <property type="project" value="UniProtKB-UniRule"/>
</dbReference>
<dbReference type="GO" id="GO:0042777">
    <property type="term" value="P:proton motive force-driven plasma membrane ATP synthesis"/>
    <property type="evidence" value="ECO:0007669"/>
    <property type="project" value="UniProtKB-UniRule"/>
</dbReference>
<dbReference type="CDD" id="cd12151">
    <property type="entry name" value="F1-ATPase_gamma"/>
    <property type="match status" value="1"/>
</dbReference>
<dbReference type="FunFam" id="1.10.287.80:FF:000001">
    <property type="entry name" value="ATP synthase gamma chain"/>
    <property type="match status" value="1"/>
</dbReference>
<dbReference type="Gene3D" id="3.40.1380.10">
    <property type="match status" value="1"/>
</dbReference>
<dbReference type="Gene3D" id="1.10.287.80">
    <property type="entry name" value="ATP synthase, gamma subunit, helix hairpin domain"/>
    <property type="match status" value="1"/>
</dbReference>
<dbReference type="HAMAP" id="MF_00815">
    <property type="entry name" value="ATP_synth_gamma_bact"/>
    <property type="match status" value="1"/>
</dbReference>
<dbReference type="InterPro" id="IPR035968">
    <property type="entry name" value="ATP_synth_F1_ATPase_gsu"/>
</dbReference>
<dbReference type="InterPro" id="IPR000131">
    <property type="entry name" value="ATP_synth_F1_gsu"/>
</dbReference>
<dbReference type="InterPro" id="IPR023632">
    <property type="entry name" value="ATP_synth_F1_gsu_CS"/>
</dbReference>
<dbReference type="NCBIfam" id="TIGR01146">
    <property type="entry name" value="ATPsyn_F1gamma"/>
    <property type="match status" value="1"/>
</dbReference>
<dbReference type="NCBIfam" id="NF004146">
    <property type="entry name" value="PRK05621.1-4"/>
    <property type="match status" value="1"/>
</dbReference>
<dbReference type="PANTHER" id="PTHR11693">
    <property type="entry name" value="ATP SYNTHASE GAMMA CHAIN"/>
    <property type="match status" value="1"/>
</dbReference>
<dbReference type="PANTHER" id="PTHR11693:SF22">
    <property type="entry name" value="ATP SYNTHASE SUBUNIT GAMMA, MITOCHONDRIAL"/>
    <property type="match status" value="1"/>
</dbReference>
<dbReference type="Pfam" id="PF00231">
    <property type="entry name" value="ATP-synt"/>
    <property type="match status" value="1"/>
</dbReference>
<dbReference type="PIRSF" id="PIRSF039089">
    <property type="entry name" value="ATP_synthase_gamma"/>
    <property type="match status" value="1"/>
</dbReference>
<dbReference type="PRINTS" id="PR00126">
    <property type="entry name" value="ATPASEGAMMA"/>
</dbReference>
<dbReference type="SUPFAM" id="SSF52943">
    <property type="entry name" value="ATP synthase (F1-ATPase), gamma subunit"/>
    <property type="match status" value="1"/>
</dbReference>
<dbReference type="PROSITE" id="PS00153">
    <property type="entry name" value="ATPASE_GAMMA"/>
    <property type="match status" value="1"/>
</dbReference>
<name>ATPG_RHOCA</name>
<accession>P72246</accession>
<comment type="function">
    <text>Produces ATP from ADP in the presence of a proton gradient across the membrane. The gamma chain is believed to be important in regulating ATPase activity and the flow of protons through the CF(0) complex.</text>
</comment>
<comment type="subunit">
    <text evidence="2">F-type ATPases have 2 components, CF(1) - the catalytic core - and CF(0) - the membrane proton channel. CF(1) has five subunits: alpha(3), beta(3), gamma(1), delta(1), epsilon(1). CF(0) has four main subunits: a, b, b' and c.</text>
</comment>
<comment type="subcellular location">
    <subcellularLocation>
        <location evidence="2">Cellular chromatophore membrane</location>
        <topology evidence="1 2">Peripheral membrane protein</topology>
    </subcellularLocation>
</comment>
<comment type="similarity">
    <text evidence="1">Belongs to the ATPase gamma chain family.</text>
</comment>
<evidence type="ECO:0000255" key="1">
    <source>
        <dbReference type="HAMAP-Rule" id="MF_00815"/>
    </source>
</evidence>
<evidence type="ECO:0000269" key="2">
    <source ref="2"/>
</evidence>
<gene>
    <name evidence="1" type="primary">atpG</name>
</gene>